<evidence type="ECO:0000255" key="1">
    <source>
        <dbReference type="HAMAP-Rule" id="MF_00140"/>
    </source>
</evidence>
<evidence type="ECO:0000305" key="2"/>
<evidence type="ECO:0007829" key="3">
    <source>
        <dbReference type="PDB" id="3N9I"/>
    </source>
</evidence>
<gene>
    <name evidence="1" type="primary">trpS</name>
    <name type="ordered locus">YPO0157</name>
    <name type="ordered locus">y3940</name>
    <name type="ordered locus">YP_0159</name>
</gene>
<sequence length="342" mass="38225">MVLSKPTVSSKPIVFSGAQPSGELTIGNYMGALRQWVQMQDDYDCIYCIVDLHAITARQDPALLRKRTLDTLALYLACGIDPKKSTIFVQSHVPEHSQLSWALNCYTYFGELSRMTQFKDKSARYAENINAGLFDYPVLMAADILLYQTNQVPVGEDQKQHLELSRDIASRFNNLYGDIFKIPEPFIPKAGARVMSLQDPTKKMSKSDDNRNNVIELLEDPKSVVKKIKRAMTDSDEPALIRYDVEKKAGVSNLLDILSGVTGQSIPELEAQFTGQMYGHLKGAVADAVSGMLSELQERYRTYREDEALLQDVMREGAAKARARAQVTLAKVYEAIGFVAQP</sequence>
<comment type="function">
    <text evidence="1">Catalyzes the attachment of tryptophan to tRNA(Trp).</text>
</comment>
<comment type="catalytic activity">
    <reaction evidence="1">
        <text>tRNA(Trp) + L-tryptophan + ATP = L-tryptophyl-tRNA(Trp) + AMP + diphosphate + H(+)</text>
        <dbReference type="Rhea" id="RHEA:24080"/>
        <dbReference type="Rhea" id="RHEA-COMP:9671"/>
        <dbReference type="Rhea" id="RHEA-COMP:9705"/>
        <dbReference type="ChEBI" id="CHEBI:15378"/>
        <dbReference type="ChEBI" id="CHEBI:30616"/>
        <dbReference type="ChEBI" id="CHEBI:33019"/>
        <dbReference type="ChEBI" id="CHEBI:57912"/>
        <dbReference type="ChEBI" id="CHEBI:78442"/>
        <dbReference type="ChEBI" id="CHEBI:78535"/>
        <dbReference type="ChEBI" id="CHEBI:456215"/>
        <dbReference type="EC" id="6.1.1.2"/>
    </reaction>
</comment>
<comment type="subunit">
    <text evidence="1">Homodimer.</text>
</comment>
<comment type="subcellular location">
    <subcellularLocation>
        <location evidence="1">Cytoplasm</location>
    </subcellularLocation>
</comment>
<comment type="similarity">
    <text evidence="1">Belongs to the class-I aminoacyl-tRNA synthetase family.</text>
</comment>
<comment type="sequence caution" evidence="2">
    <conflict type="erroneous initiation">
        <sequence resource="EMBL-CDS" id="AAM87484"/>
    </conflict>
</comment>
<comment type="sequence caution" evidence="2">
    <conflict type="erroneous initiation">
        <sequence resource="EMBL-CDS" id="AAS60437"/>
    </conflict>
</comment>
<comment type="sequence caution" evidence="2">
    <conflict type="erroneous initiation">
        <sequence resource="EMBL-CDS" id="CAL18843"/>
    </conflict>
</comment>
<reference key="1">
    <citation type="journal article" date="2001" name="Nature">
        <title>Genome sequence of Yersinia pestis, the causative agent of plague.</title>
        <authorList>
            <person name="Parkhill J."/>
            <person name="Wren B.W."/>
            <person name="Thomson N.R."/>
            <person name="Titball R.W."/>
            <person name="Holden M.T.G."/>
            <person name="Prentice M.B."/>
            <person name="Sebaihia M."/>
            <person name="James K.D."/>
            <person name="Churcher C.M."/>
            <person name="Mungall K.L."/>
            <person name="Baker S."/>
            <person name="Basham D."/>
            <person name="Bentley S.D."/>
            <person name="Brooks K."/>
            <person name="Cerdeno-Tarraga A.-M."/>
            <person name="Chillingworth T."/>
            <person name="Cronin A."/>
            <person name="Davies R.M."/>
            <person name="Davis P."/>
            <person name="Dougan G."/>
            <person name="Feltwell T."/>
            <person name="Hamlin N."/>
            <person name="Holroyd S."/>
            <person name="Jagels K."/>
            <person name="Karlyshev A.V."/>
            <person name="Leather S."/>
            <person name="Moule S."/>
            <person name="Oyston P.C.F."/>
            <person name="Quail M.A."/>
            <person name="Rutherford K.M."/>
            <person name="Simmonds M."/>
            <person name="Skelton J."/>
            <person name="Stevens K."/>
            <person name="Whitehead S."/>
            <person name="Barrell B.G."/>
        </authorList>
    </citation>
    <scope>NUCLEOTIDE SEQUENCE [LARGE SCALE GENOMIC DNA]</scope>
    <source>
        <strain>CO-92 / Biovar Orientalis</strain>
    </source>
</reference>
<reference key="2">
    <citation type="journal article" date="2002" name="J. Bacteriol.">
        <title>Genome sequence of Yersinia pestis KIM.</title>
        <authorList>
            <person name="Deng W."/>
            <person name="Burland V."/>
            <person name="Plunkett G. III"/>
            <person name="Boutin A."/>
            <person name="Mayhew G.F."/>
            <person name="Liss P."/>
            <person name="Perna N.T."/>
            <person name="Rose D.J."/>
            <person name="Mau B."/>
            <person name="Zhou S."/>
            <person name="Schwartz D.C."/>
            <person name="Fetherston J.D."/>
            <person name="Lindler L.E."/>
            <person name="Brubaker R.R."/>
            <person name="Plano G.V."/>
            <person name="Straley S.C."/>
            <person name="McDonough K.A."/>
            <person name="Nilles M.L."/>
            <person name="Matson J.S."/>
            <person name="Blattner F.R."/>
            <person name="Perry R.D."/>
        </authorList>
    </citation>
    <scope>NUCLEOTIDE SEQUENCE [LARGE SCALE GENOMIC DNA]</scope>
    <source>
        <strain>KIM10+ / Biovar Mediaevalis</strain>
    </source>
</reference>
<reference key="3">
    <citation type="journal article" date="2004" name="DNA Res.">
        <title>Complete genome sequence of Yersinia pestis strain 91001, an isolate avirulent to humans.</title>
        <authorList>
            <person name="Song Y."/>
            <person name="Tong Z."/>
            <person name="Wang J."/>
            <person name="Wang L."/>
            <person name="Guo Z."/>
            <person name="Han Y."/>
            <person name="Zhang J."/>
            <person name="Pei D."/>
            <person name="Zhou D."/>
            <person name="Qin H."/>
            <person name="Pang X."/>
            <person name="Han Y."/>
            <person name="Zhai J."/>
            <person name="Li M."/>
            <person name="Cui B."/>
            <person name="Qi Z."/>
            <person name="Jin L."/>
            <person name="Dai R."/>
            <person name="Chen F."/>
            <person name="Li S."/>
            <person name="Ye C."/>
            <person name="Du Z."/>
            <person name="Lin W."/>
            <person name="Wang J."/>
            <person name="Yu J."/>
            <person name="Yang H."/>
            <person name="Wang J."/>
            <person name="Huang P."/>
            <person name="Yang R."/>
        </authorList>
    </citation>
    <scope>NUCLEOTIDE SEQUENCE [LARGE SCALE GENOMIC DNA]</scope>
    <source>
        <strain>91001 / Biovar Mediaevalis</strain>
    </source>
</reference>
<proteinExistence type="evidence at protein level"/>
<feature type="chain" id="PRO_0000136716" description="Tryptophan--tRNA ligase">
    <location>
        <begin position="1"/>
        <end position="342"/>
    </location>
</feature>
<feature type="short sequence motif" description="'HIGH' region" evidence="1">
    <location>
        <begin position="20"/>
        <end position="28"/>
    </location>
</feature>
<feature type="short sequence motif" description="'KMSKS' region" evidence="1">
    <location>
        <begin position="203"/>
        <end position="207"/>
    </location>
</feature>
<feature type="binding site" evidence="1">
    <location>
        <begin position="19"/>
        <end position="21"/>
    </location>
    <ligand>
        <name>ATP</name>
        <dbReference type="ChEBI" id="CHEBI:30616"/>
    </ligand>
</feature>
<feature type="binding site" evidence="1">
    <location>
        <begin position="27"/>
        <end position="28"/>
    </location>
    <ligand>
        <name>ATP</name>
        <dbReference type="ChEBI" id="CHEBI:30616"/>
    </ligand>
</feature>
<feature type="binding site" evidence="1">
    <location>
        <position position="143"/>
    </location>
    <ligand>
        <name>L-tryptophan</name>
        <dbReference type="ChEBI" id="CHEBI:57912"/>
    </ligand>
</feature>
<feature type="binding site" evidence="1">
    <location>
        <begin position="155"/>
        <end position="157"/>
    </location>
    <ligand>
        <name>ATP</name>
        <dbReference type="ChEBI" id="CHEBI:30616"/>
    </ligand>
</feature>
<feature type="binding site" evidence="1">
    <location>
        <position position="194"/>
    </location>
    <ligand>
        <name>ATP</name>
        <dbReference type="ChEBI" id="CHEBI:30616"/>
    </ligand>
</feature>
<feature type="binding site" evidence="1">
    <location>
        <begin position="203"/>
        <end position="207"/>
    </location>
    <ligand>
        <name>ATP</name>
        <dbReference type="ChEBI" id="CHEBI:30616"/>
    </ligand>
</feature>
<feature type="strand" evidence="3">
    <location>
        <begin position="13"/>
        <end position="18"/>
    </location>
</feature>
<feature type="helix" evidence="3">
    <location>
        <begin position="26"/>
        <end position="31"/>
    </location>
</feature>
<feature type="helix" evidence="3">
    <location>
        <begin position="33"/>
        <end position="37"/>
    </location>
</feature>
<feature type="turn" evidence="3">
    <location>
        <begin position="38"/>
        <end position="42"/>
    </location>
</feature>
<feature type="strand" evidence="3">
    <location>
        <begin position="43"/>
        <end position="49"/>
    </location>
</feature>
<feature type="helix" evidence="3">
    <location>
        <begin position="51"/>
        <end position="54"/>
    </location>
</feature>
<feature type="helix" evidence="3">
    <location>
        <begin position="61"/>
        <end position="78"/>
    </location>
</feature>
<feature type="turn" evidence="3">
    <location>
        <begin position="82"/>
        <end position="84"/>
    </location>
</feature>
<feature type="strand" evidence="3">
    <location>
        <begin position="85"/>
        <end position="89"/>
    </location>
</feature>
<feature type="helix" evidence="3">
    <location>
        <begin position="90"/>
        <end position="92"/>
    </location>
</feature>
<feature type="helix" evidence="3">
    <location>
        <begin position="95"/>
        <end position="104"/>
    </location>
</feature>
<feature type="helix" evidence="3">
    <location>
        <begin position="109"/>
        <end position="113"/>
    </location>
</feature>
<feature type="helix" evidence="3">
    <location>
        <begin position="116"/>
        <end position="124"/>
    </location>
</feature>
<feature type="helix" evidence="3">
    <location>
        <begin position="126"/>
        <end position="128"/>
    </location>
</feature>
<feature type="helix" evidence="3">
    <location>
        <begin position="131"/>
        <end position="145"/>
    </location>
</feature>
<feature type="turn" evidence="3">
    <location>
        <begin position="146"/>
        <end position="148"/>
    </location>
</feature>
<feature type="strand" evidence="3">
    <location>
        <begin position="150"/>
        <end position="152"/>
    </location>
</feature>
<feature type="helix" evidence="3">
    <location>
        <begin position="156"/>
        <end position="158"/>
    </location>
</feature>
<feature type="helix" evidence="3">
    <location>
        <begin position="159"/>
        <end position="176"/>
    </location>
</feature>
<feature type="helix" evidence="3">
    <location>
        <begin position="211"/>
        <end position="213"/>
    </location>
</feature>
<feature type="helix" evidence="3">
    <location>
        <begin position="221"/>
        <end position="229"/>
    </location>
</feature>
<feature type="turn" evidence="3">
    <location>
        <begin position="245"/>
        <end position="247"/>
    </location>
</feature>
<feature type="helix" evidence="3">
    <location>
        <begin position="249"/>
        <end position="262"/>
    </location>
</feature>
<feature type="helix" evidence="3">
    <location>
        <begin position="266"/>
        <end position="272"/>
    </location>
</feature>
<feature type="turn" evidence="3">
    <location>
        <begin position="273"/>
        <end position="275"/>
    </location>
</feature>
<feature type="helix" evidence="3">
    <location>
        <begin position="278"/>
        <end position="304"/>
    </location>
</feature>
<feature type="helix" evidence="3">
    <location>
        <begin position="307"/>
        <end position="336"/>
    </location>
</feature>
<keyword id="KW-0002">3D-structure</keyword>
<keyword id="KW-0030">Aminoacyl-tRNA synthetase</keyword>
<keyword id="KW-0067">ATP-binding</keyword>
<keyword id="KW-0963">Cytoplasm</keyword>
<keyword id="KW-0436">Ligase</keyword>
<keyword id="KW-0547">Nucleotide-binding</keyword>
<keyword id="KW-0648">Protein biosynthesis</keyword>
<keyword id="KW-1185">Reference proteome</keyword>
<accession>Q8ZJF2</accession>
<accession>Q0WKE5</accession>
<protein>
    <recommendedName>
        <fullName evidence="1">Tryptophan--tRNA ligase</fullName>
        <ecNumber evidence="1">6.1.1.2</ecNumber>
    </recommendedName>
    <alternativeName>
        <fullName evidence="1">Tryptophanyl-tRNA synthetase</fullName>
        <shortName evidence="1">TrpRS</shortName>
    </alternativeName>
</protein>
<name>SYW_YERPE</name>
<dbReference type="EC" id="6.1.1.2" evidence="1"/>
<dbReference type="EMBL" id="AL590842">
    <property type="protein sequence ID" value="CAL18843.1"/>
    <property type="status" value="ALT_INIT"/>
    <property type="molecule type" value="Genomic_DNA"/>
</dbReference>
<dbReference type="EMBL" id="AE009952">
    <property type="protein sequence ID" value="AAM87484.1"/>
    <property type="status" value="ALT_INIT"/>
    <property type="molecule type" value="Genomic_DNA"/>
</dbReference>
<dbReference type="EMBL" id="AE017042">
    <property type="protein sequence ID" value="AAS60437.1"/>
    <property type="status" value="ALT_INIT"/>
    <property type="molecule type" value="Genomic_DNA"/>
</dbReference>
<dbReference type="PIR" id="AB0020">
    <property type="entry name" value="AB0020"/>
</dbReference>
<dbReference type="RefSeq" id="YP_002345243.1">
    <property type="nucleotide sequence ID" value="NC_003143.1"/>
</dbReference>
<dbReference type="PDB" id="3N9I">
    <property type="method" value="X-ray"/>
    <property type="resolution" value="1.95 A"/>
    <property type="chains" value="A/B=1-342"/>
</dbReference>
<dbReference type="PDBsum" id="3N9I"/>
<dbReference type="SMR" id="Q8ZJF2"/>
<dbReference type="STRING" id="214092.YPO0157"/>
<dbReference type="PaxDb" id="214092-YPO0157"/>
<dbReference type="DNASU" id="1148887"/>
<dbReference type="EnsemblBacteria" id="AAS60437">
    <property type="protein sequence ID" value="AAS60437"/>
    <property type="gene ID" value="YP_0159"/>
</dbReference>
<dbReference type="KEGG" id="ype:YPO0157"/>
<dbReference type="KEGG" id="ypk:y3940"/>
<dbReference type="KEGG" id="ypm:YP_0159"/>
<dbReference type="PATRIC" id="fig|214092.21.peg.385"/>
<dbReference type="eggNOG" id="COG0180">
    <property type="taxonomic scope" value="Bacteria"/>
</dbReference>
<dbReference type="HOGENOM" id="CLU_029244_1_1_6"/>
<dbReference type="EvolutionaryTrace" id="Q8ZJF2"/>
<dbReference type="Proteomes" id="UP000000815">
    <property type="component" value="Chromosome"/>
</dbReference>
<dbReference type="Proteomes" id="UP000001019">
    <property type="component" value="Chromosome"/>
</dbReference>
<dbReference type="Proteomes" id="UP000002490">
    <property type="component" value="Chromosome"/>
</dbReference>
<dbReference type="GO" id="GO:0005829">
    <property type="term" value="C:cytosol"/>
    <property type="evidence" value="ECO:0000318"/>
    <property type="project" value="GO_Central"/>
</dbReference>
<dbReference type="GO" id="GO:0005524">
    <property type="term" value="F:ATP binding"/>
    <property type="evidence" value="ECO:0007669"/>
    <property type="project" value="UniProtKB-UniRule"/>
</dbReference>
<dbReference type="GO" id="GO:0004830">
    <property type="term" value="F:tryptophan-tRNA ligase activity"/>
    <property type="evidence" value="ECO:0000318"/>
    <property type="project" value="GO_Central"/>
</dbReference>
<dbReference type="GO" id="GO:0006436">
    <property type="term" value="P:tryptophanyl-tRNA aminoacylation"/>
    <property type="evidence" value="ECO:0000318"/>
    <property type="project" value="GO_Central"/>
</dbReference>
<dbReference type="CDD" id="cd00806">
    <property type="entry name" value="TrpRS_core"/>
    <property type="match status" value="1"/>
</dbReference>
<dbReference type="FunFam" id="1.10.240.10:FF:000002">
    <property type="entry name" value="Tryptophan--tRNA ligase"/>
    <property type="match status" value="1"/>
</dbReference>
<dbReference type="FunFam" id="3.40.50.620:FF:000024">
    <property type="entry name" value="Tryptophan--tRNA ligase"/>
    <property type="match status" value="1"/>
</dbReference>
<dbReference type="Gene3D" id="3.40.50.620">
    <property type="entry name" value="HUPs"/>
    <property type="match status" value="1"/>
</dbReference>
<dbReference type="Gene3D" id="1.10.240.10">
    <property type="entry name" value="Tyrosyl-Transfer RNA Synthetase"/>
    <property type="match status" value="1"/>
</dbReference>
<dbReference type="HAMAP" id="MF_00140_B">
    <property type="entry name" value="Trp_tRNA_synth_B"/>
    <property type="match status" value="1"/>
</dbReference>
<dbReference type="InterPro" id="IPR001412">
    <property type="entry name" value="aa-tRNA-synth_I_CS"/>
</dbReference>
<dbReference type="InterPro" id="IPR002305">
    <property type="entry name" value="aa-tRNA-synth_Ic"/>
</dbReference>
<dbReference type="InterPro" id="IPR014729">
    <property type="entry name" value="Rossmann-like_a/b/a_fold"/>
</dbReference>
<dbReference type="InterPro" id="IPR002306">
    <property type="entry name" value="Trp-tRNA-ligase"/>
</dbReference>
<dbReference type="InterPro" id="IPR024109">
    <property type="entry name" value="Trp-tRNA-ligase_bac-type"/>
</dbReference>
<dbReference type="InterPro" id="IPR050203">
    <property type="entry name" value="Trp-tRNA_synthetase"/>
</dbReference>
<dbReference type="NCBIfam" id="TIGR00233">
    <property type="entry name" value="trpS"/>
    <property type="match status" value="1"/>
</dbReference>
<dbReference type="PANTHER" id="PTHR43766">
    <property type="entry name" value="TRYPTOPHAN--TRNA LIGASE, MITOCHONDRIAL"/>
    <property type="match status" value="1"/>
</dbReference>
<dbReference type="PANTHER" id="PTHR43766:SF1">
    <property type="entry name" value="TRYPTOPHAN--TRNA LIGASE, MITOCHONDRIAL"/>
    <property type="match status" value="1"/>
</dbReference>
<dbReference type="Pfam" id="PF00579">
    <property type="entry name" value="tRNA-synt_1b"/>
    <property type="match status" value="1"/>
</dbReference>
<dbReference type="PRINTS" id="PR01039">
    <property type="entry name" value="TRNASYNTHTRP"/>
</dbReference>
<dbReference type="SUPFAM" id="SSF52374">
    <property type="entry name" value="Nucleotidylyl transferase"/>
    <property type="match status" value="1"/>
</dbReference>
<dbReference type="PROSITE" id="PS00178">
    <property type="entry name" value="AA_TRNA_LIGASE_I"/>
    <property type="match status" value="1"/>
</dbReference>
<organism>
    <name type="scientific">Yersinia pestis</name>
    <dbReference type="NCBI Taxonomy" id="632"/>
    <lineage>
        <taxon>Bacteria</taxon>
        <taxon>Pseudomonadati</taxon>
        <taxon>Pseudomonadota</taxon>
        <taxon>Gammaproteobacteria</taxon>
        <taxon>Enterobacterales</taxon>
        <taxon>Yersiniaceae</taxon>
        <taxon>Yersinia</taxon>
    </lineage>
</organism>